<accession>P37641</accession>
<accession>Q2M7I3</accession>
<feature type="chain" id="PRO_0000105799" description="Uncharacterized HTH-type transcriptional regulator YhjC">
    <location>
        <begin position="1"/>
        <end position="299"/>
    </location>
</feature>
<feature type="domain" description="HTH lysR-type" evidence="1">
    <location>
        <begin position="1"/>
        <end position="59"/>
    </location>
</feature>
<feature type="DNA-binding region" description="H-T-H motif" evidence="1">
    <location>
        <begin position="19"/>
        <end position="38"/>
    </location>
</feature>
<proteinExistence type="inferred from homology"/>
<gene>
    <name type="primary">yhjC</name>
    <name type="ordered locus">b3521</name>
    <name type="ordered locus">JW3489</name>
</gene>
<reference key="1">
    <citation type="journal article" date="1994" name="Nucleic Acids Res.">
        <title>Analysis of the Escherichia coli genome. V. DNA sequence of the region from 76.0 to 81.5 minutes.</title>
        <authorList>
            <person name="Sofia H.J."/>
            <person name="Burland V."/>
            <person name="Daniels D.L."/>
            <person name="Plunkett G. III"/>
            <person name="Blattner F.R."/>
        </authorList>
    </citation>
    <scope>NUCLEOTIDE SEQUENCE [LARGE SCALE GENOMIC DNA]</scope>
    <source>
        <strain>K12 / MG1655 / ATCC 47076</strain>
    </source>
</reference>
<reference key="2">
    <citation type="journal article" date="1997" name="Science">
        <title>The complete genome sequence of Escherichia coli K-12.</title>
        <authorList>
            <person name="Blattner F.R."/>
            <person name="Plunkett G. III"/>
            <person name="Bloch C.A."/>
            <person name="Perna N.T."/>
            <person name="Burland V."/>
            <person name="Riley M."/>
            <person name="Collado-Vides J."/>
            <person name="Glasner J.D."/>
            <person name="Rode C.K."/>
            <person name="Mayhew G.F."/>
            <person name="Gregor J."/>
            <person name="Davis N.W."/>
            <person name="Kirkpatrick H.A."/>
            <person name="Goeden M.A."/>
            <person name="Rose D.J."/>
            <person name="Mau B."/>
            <person name="Shao Y."/>
        </authorList>
    </citation>
    <scope>NUCLEOTIDE SEQUENCE [LARGE SCALE GENOMIC DNA]</scope>
    <source>
        <strain>K12 / MG1655 / ATCC 47076</strain>
    </source>
</reference>
<reference key="3">
    <citation type="journal article" date="2006" name="Mol. Syst. Biol.">
        <title>Highly accurate genome sequences of Escherichia coli K-12 strains MG1655 and W3110.</title>
        <authorList>
            <person name="Hayashi K."/>
            <person name="Morooka N."/>
            <person name="Yamamoto Y."/>
            <person name="Fujita K."/>
            <person name="Isono K."/>
            <person name="Choi S."/>
            <person name="Ohtsubo E."/>
            <person name="Baba T."/>
            <person name="Wanner B.L."/>
            <person name="Mori H."/>
            <person name="Horiuchi T."/>
        </authorList>
    </citation>
    <scope>NUCLEOTIDE SEQUENCE [LARGE SCALE GENOMIC DNA]</scope>
    <source>
        <strain>K12 / W3110 / ATCC 27325 / DSM 5911</strain>
    </source>
</reference>
<protein>
    <recommendedName>
        <fullName>Uncharacterized HTH-type transcriptional regulator YhjC</fullName>
    </recommendedName>
</protein>
<sequence>MDKIHAMQLFIKVAELESFSRAADFFALPKGSVSRQIQALEHQLGTQLLQRTTRRVKLTPEGMTYYQRAKDVLSNLSELDGLFQQDATSISGKLRIDIPPGIAKSLLLPRLSEFLYLHPGIELELSSHDRPVDILHDGFDCVIRTGALPEDGVIARPLGKLTMVNCASPHYLTRFGYPQSPDDLTSHAIVRYTPHLGVHPLGFEVASVNGVQWFKSGGMLTVNSSENYLTAGLAGLGIIQIPRIAVREALRAGRLIEVLPGYRAEPLSLSLVYPQRRELSRRVNLFMQWLAGVMKEYLD</sequence>
<organism>
    <name type="scientific">Escherichia coli (strain K12)</name>
    <dbReference type="NCBI Taxonomy" id="83333"/>
    <lineage>
        <taxon>Bacteria</taxon>
        <taxon>Pseudomonadati</taxon>
        <taxon>Pseudomonadota</taxon>
        <taxon>Gammaproteobacteria</taxon>
        <taxon>Enterobacterales</taxon>
        <taxon>Enterobacteriaceae</taxon>
        <taxon>Escherichia</taxon>
    </lineage>
</organism>
<dbReference type="EMBL" id="U00039">
    <property type="protein sequence ID" value="AAB18497.1"/>
    <property type="status" value="ALT_INIT"/>
    <property type="molecule type" value="Genomic_DNA"/>
</dbReference>
<dbReference type="EMBL" id="U00096">
    <property type="protein sequence ID" value="AAC76546.2"/>
    <property type="molecule type" value="Genomic_DNA"/>
</dbReference>
<dbReference type="EMBL" id="AP009048">
    <property type="protein sequence ID" value="BAE77773.1"/>
    <property type="status" value="ALT_INIT"/>
    <property type="molecule type" value="Genomic_DNA"/>
</dbReference>
<dbReference type="PIR" id="S47741">
    <property type="entry name" value="S47741"/>
</dbReference>
<dbReference type="RefSeq" id="NP_417978.2">
    <property type="nucleotide sequence ID" value="NC_000913.3"/>
</dbReference>
<dbReference type="RefSeq" id="WP_000357790.1">
    <property type="nucleotide sequence ID" value="NZ_SSZK01000039.1"/>
</dbReference>
<dbReference type="SMR" id="P37641"/>
<dbReference type="BioGRID" id="4262157">
    <property type="interactions" value="114"/>
</dbReference>
<dbReference type="DIP" id="DIP-12378N"/>
<dbReference type="FunCoup" id="P37641">
    <property type="interactions" value="35"/>
</dbReference>
<dbReference type="IntAct" id="P37641">
    <property type="interactions" value="2"/>
</dbReference>
<dbReference type="STRING" id="511145.b3521"/>
<dbReference type="PaxDb" id="511145-b3521"/>
<dbReference type="EnsemblBacteria" id="AAC76546">
    <property type="protein sequence ID" value="AAC76546"/>
    <property type="gene ID" value="b3521"/>
</dbReference>
<dbReference type="GeneID" id="948035"/>
<dbReference type="KEGG" id="ecj:JW3489"/>
<dbReference type="KEGG" id="eco:b3521"/>
<dbReference type="KEGG" id="ecoc:C3026_19075"/>
<dbReference type="PATRIC" id="fig|511145.12.peg.3630"/>
<dbReference type="EchoBASE" id="EB2158"/>
<dbReference type="eggNOG" id="COG0583">
    <property type="taxonomic scope" value="Bacteria"/>
</dbReference>
<dbReference type="HOGENOM" id="CLU_039613_16_3_6"/>
<dbReference type="InParanoid" id="P37641"/>
<dbReference type="OMA" id="VHLFMEW"/>
<dbReference type="OrthoDB" id="9786526at2"/>
<dbReference type="PhylomeDB" id="P37641"/>
<dbReference type="BioCyc" id="EcoCyc:EG12247-MONOMER"/>
<dbReference type="PRO" id="PR:P37641"/>
<dbReference type="Proteomes" id="UP000000625">
    <property type="component" value="Chromosome"/>
</dbReference>
<dbReference type="GO" id="GO:0003700">
    <property type="term" value="F:DNA-binding transcription factor activity"/>
    <property type="evidence" value="ECO:0000318"/>
    <property type="project" value="GO_Central"/>
</dbReference>
<dbReference type="GO" id="GO:0043565">
    <property type="term" value="F:sequence-specific DNA binding"/>
    <property type="evidence" value="ECO:0000318"/>
    <property type="project" value="GO_Central"/>
</dbReference>
<dbReference type="GO" id="GO:0006351">
    <property type="term" value="P:DNA-templated transcription"/>
    <property type="evidence" value="ECO:0000318"/>
    <property type="project" value="GO_Central"/>
</dbReference>
<dbReference type="CDD" id="cd08472">
    <property type="entry name" value="PBP2_CrgA_like_3"/>
    <property type="match status" value="1"/>
</dbReference>
<dbReference type="FunFam" id="1.10.10.10:FF:000001">
    <property type="entry name" value="LysR family transcriptional regulator"/>
    <property type="match status" value="1"/>
</dbReference>
<dbReference type="FunFam" id="3.40.190.290:FF:000001">
    <property type="entry name" value="Transcriptional regulator, LysR family"/>
    <property type="match status" value="1"/>
</dbReference>
<dbReference type="Gene3D" id="3.40.190.290">
    <property type="match status" value="1"/>
</dbReference>
<dbReference type="Gene3D" id="1.10.10.10">
    <property type="entry name" value="Winged helix-like DNA-binding domain superfamily/Winged helix DNA-binding domain"/>
    <property type="match status" value="1"/>
</dbReference>
<dbReference type="InterPro" id="IPR005119">
    <property type="entry name" value="LysR_subst-bd"/>
</dbReference>
<dbReference type="InterPro" id="IPR000847">
    <property type="entry name" value="Tscrpt_reg_HTH_LysR"/>
</dbReference>
<dbReference type="InterPro" id="IPR036388">
    <property type="entry name" value="WH-like_DNA-bd_sf"/>
</dbReference>
<dbReference type="InterPro" id="IPR036390">
    <property type="entry name" value="WH_DNA-bd_sf"/>
</dbReference>
<dbReference type="PANTHER" id="PTHR30537">
    <property type="entry name" value="HTH-TYPE TRANSCRIPTIONAL REGULATOR"/>
    <property type="match status" value="1"/>
</dbReference>
<dbReference type="PANTHER" id="PTHR30537:SF72">
    <property type="entry name" value="LYSR FAMILY TRANSCRIPTIONAL REGULATOR"/>
    <property type="match status" value="1"/>
</dbReference>
<dbReference type="Pfam" id="PF00126">
    <property type="entry name" value="HTH_1"/>
    <property type="match status" value="1"/>
</dbReference>
<dbReference type="Pfam" id="PF03466">
    <property type="entry name" value="LysR_substrate"/>
    <property type="match status" value="1"/>
</dbReference>
<dbReference type="SUPFAM" id="SSF53850">
    <property type="entry name" value="Periplasmic binding protein-like II"/>
    <property type="match status" value="1"/>
</dbReference>
<dbReference type="SUPFAM" id="SSF46785">
    <property type="entry name" value="Winged helix' DNA-binding domain"/>
    <property type="match status" value="1"/>
</dbReference>
<dbReference type="PROSITE" id="PS50931">
    <property type="entry name" value="HTH_LYSR"/>
    <property type="match status" value="1"/>
</dbReference>
<evidence type="ECO:0000255" key="1">
    <source>
        <dbReference type="PROSITE-ProRule" id="PRU00253"/>
    </source>
</evidence>
<evidence type="ECO:0000305" key="2"/>
<comment type="similarity">
    <text evidence="2">Belongs to the LysR transcriptional regulatory family.</text>
</comment>
<comment type="sequence caution" evidence="2">
    <conflict type="erroneous initiation">
        <sequence resource="EMBL-CDS" id="AAB18497"/>
    </conflict>
</comment>
<comment type="sequence caution" evidence="2">
    <conflict type="erroneous initiation">
        <sequence resource="EMBL-CDS" id="BAE77773"/>
    </conflict>
</comment>
<name>YHJC_ECOLI</name>
<keyword id="KW-0238">DNA-binding</keyword>
<keyword id="KW-1185">Reference proteome</keyword>
<keyword id="KW-0804">Transcription</keyword>
<keyword id="KW-0805">Transcription regulation</keyword>